<reference key="1">
    <citation type="submission" date="2008-02" db="EMBL/GenBank/DDBJ databases">
        <title>Complete sequence of Yersinia pseudotuberculosis YPIII.</title>
        <authorList>
            <consortium name="US DOE Joint Genome Institute"/>
            <person name="Copeland A."/>
            <person name="Lucas S."/>
            <person name="Lapidus A."/>
            <person name="Glavina del Rio T."/>
            <person name="Dalin E."/>
            <person name="Tice H."/>
            <person name="Bruce D."/>
            <person name="Goodwin L."/>
            <person name="Pitluck S."/>
            <person name="Munk A.C."/>
            <person name="Brettin T."/>
            <person name="Detter J.C."/>
            <person name="Han C."/>
            <person name="Tapia R."/>
            <person name="Schmutz J."/>
            <person name="Larimer F."/>
            <person name="Land M."/>
            <person name="Hauser L."/>
            <person name="Challacombe J.F."/>
            <person name="Green L."/>
            <person name="Lindler L.E."/>
            <person name="Nikolich M.P."/>
            <person name="Richardson P."/>
        </authorList>
    </citation>
    <scope>NUCLEOTIDE SEQUENCE [LARGE SCALE GENOMIC DNA]</scope>
    <source>
        <strain>YPIII</strain>
    </source>
</reference>
<protein>
    <recommendedName>
        <fullName evidence="1">ATP-dependent protease ATPase subunit HslU</fullName>
    </recommendedName>
    <alternativeName>
        <fullName evidence="1">Unfoldase HslU</fullName>
    </alternativeName>
</protein>
<organism>
    <name type="scientific">Yersinia pseudotuberculosis serotype O:3 (strain YPIII)</name>
    <dbReference type="NCBI Taxonomy" id="502800"/>
    <lineage>
        <taxon>Bacteria</taxon>
        <taxon>Pseudomonadati</taxon>
        <taxon>Pseudomonadota</taxon>
        <taxon>Gammaproteobacteria</taxon>
        <taxon>Enterobacterales</taxon>
        <taxon>Yersiniaceae</taxon>
        <taxon>Yersinia</taxon>
    </lineage>
</organism>
<dbReference type="EMBL" id="CP000950">
    <property type="protein sequence ID" value="ACA70363.1"/>
    <property type="molecule type" value="Genomic_DNA"/>
</dbReference>
<dbReference type="RefSeq" id="WP_002208943.1">
    <property type="nucleotide sequence ID" value="NZ_CP009792.1"/>
</dbReference>
<dbReference type="SMR" id="B1JQ76"/>
<dbReference type="GeneID" id="96663576"/>
<dbReference type="KEGG" id="ypy:YPK_4104"/>
<dbReference type="PATRIC" id="fig|502800.11.peg.452"/>
<dbReference type="GO" id="GO:0009376">
    <property type="term" value="C:HslUV protease complex"/>
    <property type="evidence" value="ECO:0007669"/>
    <property type="project" value="UniProtKB-UniRule"/>
</dbReference>
<dbReference type="GO" id="GO:0005524">
    <property type="term" value="F:ATP binding"/>
    <property type="evidence" value="ECO:0007669"/>
    <property type="project" value="UniProtKB-UniRule"/>
</dbReference>
<dbReference type="GO" id="GO:0016887">
    <property type="term" value="F:ATP hydrolysis activity"/>
    <property type="evidence" value="ECO:0007669"/>
    <property type="project" value="InterPro"/>
</dbReference>
<dbReference type="GO" id="GO:0008233">
    <property type="term" value="F:peptidase activity"/>
    <property type="evidence" value="ECO:0007669"/>
    <property type="project" value="InterPro"/>
</dbReference>
<dbReference type="GO" id="GO:0036402">
    <property type="term" value="F:proteasome-activating activity"/>
    <property type="evidence" value="ECO:0007669"/>
    <property type="project" value="UniProtKB-UniRule"/>
</dbReference>
<dbReference type="GO" id="GO:0043335">
    <property type="term" value="P:protein unfolding"/>
    <property type="evidence" value="ECO:0007669"/>
    <property type="project" value="UniProtKB-UniRule"/>
</dbReference>
<dbReference type="GO" id="GO:0051603">
    <property type="term" value="P:proteolysis involved in protein catabolic process"/>
    <property type="evidence" value="ECO:0007669"/>
    <property type="project" value="TreeGrafter"/>
</dbReference>
<dbReference type="CDD" id="cd19498">
    <property type="entry name" value="RecA-like_HslU"/>
    <property type="match status" value="1"/>
</dbReference>
<dbReference type="FunFam" id="1.10.8.10:FF:000028">
    <property type="entry name" value="ATP-dependent protease ATPase subunit HslU"/>
    <property type="match status" value="2"/>
</dbReference>
<dbReference type="FunFam" id="1.10.8.60:FF:000027">
    <property type="entry name" value="ATP-dependent protease ATPase subunit HslU"/>
    <property type="match status" value="1"/>
</dbReference>
<dbReference type="FunFam" id="3.40.50.300:FF:000213">
    <property type="entry name" value="ATP-dependent protease ATPase subunit HslU"/>
    <property type="match status" value="1"/>
</dbReference>
<dbReference type="FunFam" id="3.40.50.300:FF:000220">
    <property type="entry name" value="ATP-dependent protease ATPase subunit HslU"/>
    <property type="match status" value="1"/>
</dbReference>
<dbReference type="Gene3D" id="1.10.8.60">
    <property type="match status" value="1"/>
</dbReference>
<dbReference type="Gene3D" id="1.10.8.10">
    <property type="entry name" value="DNA helicase RuvA subunit, C-terminal domain"/>
    <property type="match status" value="1"/>
</dbReference>
<dbReference type="Gene3D" id="3.40.50.300">
    <property type="entry name" value="P-loop containing nucleotide triphosphate hydrolases"/>
    <property type="match status" value="2"/>
</dbReference>
<dbReference type="HAMAP" id="MF_00249">
    <property type="entry name" value="HslU"/>
    <property type="match status" value="1"/>
</dbReference>
<dbReference type="InterPro" id="IPR003593">
    <property type="entry name" value="AAA+_ATPase"/>
</dbReference>
<dbReference type="InterPro" id="IPR050052">
    <property type="entry name" value="ATP-dep_Clp_protease_ClpX"/>
</dbReference>
<dbReference type="InterPro" id="IPR003959">
    <property type="entry name" value="ATPase_AAA_core"/>
</dbReference>
<dbReference type="InterPro" id="IPR019489">
    <property type="entry name" value="Clp_ATPase_C"/>
</dbReference>
<dbReference type="InterPro" id="IPR004491">
    <property type="entry name" value="HslU"/>
</dbReference>
<dbReference type="InterPro" id="IPR027417">
    <property type="entry name" value="P-loop_NTPase"/>
</dbReference>
<dbReference type="NCBIfam" id="TIGR00390">
    <property type="entry name" value="hslU"/>
    <property type="match status" value="1"/>
</dbReference>
<dbReference type="NCBIfam" id="NF003544">
    <property type="entry name" value="PRK05201.1"/>
    <property type="match status" value="1"/>
</dbReference>
<dbReference type="PANTHER" id="PTHR48102">
    <property type="entry name" value="ATP-DEPENDENT CLP PROTEASE ATP-BINDING SUBUNIT CLPX-LIKE, MITOCHONDRIAL-RELATED"/>
    <property type="match status" value="1"/>
</dbReference>
<dbReference type="PANTHER" id="PTHR48102:SF3">
    <property type="entry name" value="ATP-DEPENDENT PROTEASE ATPASE SUBUNIT HSLU"/>
    <property type="match status" value="1"/>
</dbReference>
<dbReference type="Pfam" id="PF00004">
    <property type="entry name" value="AAA"/>
    <property type="match status" value="1"/>
</dbReference>
<dbReference type="Pfam" id="PF07724">
    <property type="entry name" value="AAA_2"/>
    <property type="match status" value="1"/>
</dbReference>
<dbReference type="SMART" id="SM00382">
    <property type="entry name" value="AAA"/>
    <property type="match status" value="1"/>
</dbReference>
<dbReference type="SMART" id="SM01086">
    <property type="entry name" value="ClpB_D2-small"/>
    <property type="match status" value="1"/>
</dbReference>
<dbReference type="SUPFAM" id="SSF52540">
    <property type="entry name" value="P-loop containing nucleoside triphosphate hydrolases"/>
    <property type="match status" value="1"/>
</dbReference>
<comment type="function">
    <text evidence="1">ATPase subunit of a proteasome-like degradation complex; this subunit has chaperone activity. The binding of ATP and its subsequent hydrolysis by HslU are essential for unfolding of protein substrates subsequently hydrolyzed by HslV. HslU recognizes the N-terminal part of its protein substrates and unfolds these before they are guided to HslV for hydrolysis.</text>
</comment>
<comment type="subunit">
    <text evidence="1">A double ring-shaped homohexamer of HslV is capped on each side by a ring-shaped HslU homohexamer. The assembly of the HslU/HslV complex is dependent on binding of ATP.</text>
</comment>
<comment type="subcellular location">
    <subcellularLocation>
        <location evidence="1">Cytoplasm</location>
    </subcellularLocation>
</comment>
<comment type="similarity">
    <text evidence="1">Belongs to the ClpX chaperone family. HslU subfamily.</text>
</comment>
<name>HSLU_YERPY</name>
<proteinExistence type="inferred from homology"/>
<feature type="chain" id="PRO_1000100987" description="ATP-dependent protease ATPase subunit HslU">
    <location>
        <begin position="1"/>
        <end position="443"/>
    </location>
</feature>
<feature type="binding site" evidence="1">
    <location>
        <position position="18"/>
    </location>
    <ligand>
        <name>ATP</name>
        <dbReference type="ChEBI" id="CHEBI:30616"/>
    </ligand>
</feature>
<feature type="binding site" evidence="1">
    <location>
        <begin position="60"/>
        <end position="65"/>
    </location>
    <ligand>
        <name>ATP</name>
        <dbReference type="ChEBI" id="CHEBI:30616"/>
    </ligand>
</feature>
<feature type="binding site" evidence="1">
    <location>
        <position position="256"/>
    </location>
    <ligand>
        <name>ATP</name>
        <dbReference type="ChEBI" id="CHEBI:30616"/>
    </ligand>
</feature>
<feature type="binding site" evidence="1">
    <location>
        <position position="321"/>
    </location>
    <ligand>
        <name>ATP</name>
        <dbReference type="ChEBI" id="CHEBI:30616"/>
    </ligand>
</feature>
<feature type="binding site" evidence="1">
    <location>
        <position position="393"/>
    </location>
    <ligand>
        <name>ATP</name>
        <dbReference type="ChEBI" id="CHEBI:30616"/>
    </ligand>
</feature>
<gene>
    <name evidence="1" type="primary">hslU</name>
    <name type="ordered locus">YPK_4104</name>
</gene>
<accession>B1JQ76</accession>
<keyword id="KW-0067">ATP-binding</keyword>
<keyword id="KW-0143">Chaperone</keyword>
<keyword id="KW-0963">Cytoplasm</keyword>
<keyword id="KW-0547">Nucleotide-binding</keyword>
<keyword id="KW-0346">Stress response</keyword>
<sequence length="443" mass="49804">MSEMTPREIVSELDSHIIGQDKAKRAVAIALRNRWRRMQLNEELRHEVTPKNILMIGPTGVGKTEIARRLAKLANAPFIKVEATKFTEVGYVGKEVDSIIRDLTDAAVKMVRHQSIEKMRYRAEELAEERILDVLIPPAKNNWGVPDESQEPSATRQTFRKKLREGQLDDKEIEIDLAAAPMGVEIMAPPGMEEMTNQLQSMFQNIAGQKQKPRKIKIKEALKLLIEEEAAKLVNPEELKQQAIDAVEQHGIVFIDEIDKICKRGQTSGPDVSREGVQRDLLPLVEGCTVSTKHGMVKTDHILFIASGAFQVSSPSDLIPELQGRLPIRVELQALTTDDFERILTEPSASLTEQYKALMATEGVTIEFTREGIRKIAEAAWQVNERTENIGARRLHTVLERLMEDISYDASESSGQSITIDAEYVGKHLDELVADEDLSRFIL</sequence>
<evidence type="ECO:0000255" key="1">
    <source>
        <dbReference type="HAMAP-Rule" id="MF_00249"/>
    </source>
</evidence>